<proteinExistence type="inferred from homology"/>
<protein>
    <recommendedName>
        <fullName>Acylphosphatase</fullName>
        <ecNumber>3.6.1.7</ecNumber>
    </recommendedName>
    <alternativeName>
        <fullName>Acylphosphate phosphohydrolase</fullName>
    </alternativeName>
</protein>
<keyword id="KW-0378">Hydrolase</keyword>
<keyword id="KW-1185">Reference proteome</keyword>
<comment type="catalytic activity">
    <reaction>
        <text>an acyl phosphate + H2O = a carboxylate + phosphate + H(+)</text>
        <dbReference type="Rhea" id="RHEA:14965"/>
        <dbReference type="ChEBI" id="CHEBI:15377"/>
        <dbReference type="ChEBI" id="CHEBI:15378"/>
        <dbReference type="ChEBI" id="CHEBI:29067"/>
        <dbReference type="ChEBI" id="CHEBI:43474"/>
        <dbReference type="ChEBI" id="CHEBI:59918"/>
        <dbReference type="EC" id="3.6.1.7"/>
    </reaction>
</comment>
<comment type="similarity">
    <text evidence="2">Belongs to the acylphosphatase family.</text>
</comment>
<reference key="1">
    <citation type="journal article" date="2005" name="Genome Res.">
        <title>Living with two extremes: conclusions from the genome sequence of Natronomonas pharaonis.</title>
        <authorList>
            <person name="Falb M."/>
            <person name="Pfeiffer F."/>
            <person name="Palm P."/>
            <person name="Rodewald K."/>
            <person name="Hickmann V."/>
            <person name="Tittor J."/>
            <person name="Oesterhelt D."/>
        </authorList>
    </citation>
    <scope>NUCLEOTIDE SEQUENCE [LARGE SCALE GENOMIC DNA]</scope>
    <source>
        <strain>ATCC 35678 / DSM 2160 / CIP 103997 / JCM 8858 / NBRC 14720 / NCIMB 2260 / Gabara</strain>
    </source>
</reference>
<name>ACYP_NATPD</name>
<sequence>MSDRIRAHVYVSGRVQGVYYRANTRDTARERDIDGWVRNLDDGRVEAVFEGPREAVESMVGWCHTGSPKARVESVDAAYDDPEGVDGFEIRR</sequence>
<feature type="chain" id="PRO_0000326863" description="Acylphosphatase">
    <location>
        <begin position="1"/>
        <end position="92"/>
    </location>
</feature>
<feature type="domain" description="Acylphosphatase-like" evidence="1">
    <location>
        <begin position="6"/>
        <end position="92"/>
    </location>
</feature>
<feature type="active site" evidence="1">
    <location>
        <position position="21"/>
    </location>
</feature>
<feature type="active site" evidence="1">
    <location>
        <position position="39"/>
    </location>
</feature>
<evidence type="ECO:0000255" key="1">
    <source>
        <dbReference type="PROSITE-ProRule" id="PRU00520"/>
    </source>
</evidence>
<evidence type="ECO:0000305" key="2"/>
<organism>
    <name type="scientific">Natronomonas pharaonis (strain ATCC 35678 / DSM 2160 / CIP 103997 / JCM 8858 / NBRC 14720 / NCIMB 2260 / Gabara)</name>
    <name type="common">Halobacterium pharaonis</name>
    <dbReference type="NCBI Taxonomy" id="348780"/>
    <lineage>
        <taxon>Archaea</taxon>
        <taxon>Methanobacteriati</taxon>
        <taxon>Methanobacteriota</taxon>
        <taxon>Stenosarchaea group</taxon>
        <taxon>Halobacteria</taxon>
        <taxon>Halobacteriales</taxon>
        <taxon>Haloarculaceae</taxon>
        <taxon>Natronomonas</taxon>
    </lineage>
</organism>
<dbReference type="EC" id="3.6.1.7"/>
<dbReference type="EMBL" id="CR936257">
    <property type="protein sequence ID" value="CAI49966.1"/>
    <property type="molecule type" value="Genomic_DNA"/>
</dbReference>
<dbReference type="RefSeq" id="WP_011323583.1">
    <property type="nucleotide sequence ID" value="NC_007426.1"/>
</dbReference>
<dbReference type="SMR" id="Q3IPI5"/>
<dbReference type="STRING" id="348780.NP_3750A"/>
<dbReference type="EnsemblBacteria" id="CAI49966">
    <property type="protein sequence ID" value="CAI49966"/>
    <property type="gene ID" value="NP_3750A"/>
</dbReference>
<dbReference type="GeneID" id="3702491"/>
<dbReference type="KEGG" id="nph:NP_3750A"/>
<dbReference type="eggNOG" id="arCOG01674">
    <property type="taxonomic scope" value="Archaea"/>
</dbReference>
<dbReference type="HOGENOM" id="CLU_141932_3_2_2"/>
<dbReference type="OrthoDB" id="6643at2157"/>
<dbReference type="Proteomes" id="UP000002698">
    <property type="component" value="Chromosome"/>
</dbReference>
<dbReference type="GO" id="GO:0003998">
    <property type="term" value="F:acylphosphatase activity"/>
    <property type="evidence" value="ECO:0007669"/>
    <property type="project" value="UniProtKB-EC"/>
</dbReference>
<dbReference type="Gene3D" id="3.30.70.100">
    <property type="match status" value="1"/>
</dbReference>
<dbReference type="InterPro" id="IPR020456">
    <property type="entry name" value="Acylphosphatase"/>
</dbReference>
<dbReference type="InterPro" id="IPR001792">
    <property type="entry name" value="Acylphosphatase-like_dom"/>
</dbReference>
<dbReference type="InterPro" id="IPR036046">
    <property type="entry name" value="Acylphosphatase-like_dom_sf"/>
</dbReference>
<dbReference type="InterPro" id="IPR017968">
    <property type="entry name" value="Acylphosphatase_CS"/>
</dbReference>
<dbReference type="NCBIfam" id="NF011016">
    <property type="entry name" value="PRK14444.1"/>
    <property type="match status" value="1"/>
</dbReference>
<dbReference type="PANTHER" id="PTHR47268">
    <property type="entry name" value="ACYLPHOSPHATASE"/>
    <property type="match status" value="1"/>
</dbReference>
<dbReference type="PANTHER" id="PTHR47268:SF4">
    <property type="entry name" value="ACYLPHOSPHATASE"/>
    <property type="match status" value="1"/>
</dbReference>
<dbReference type="Pfam" id="PF00708">
    <property type="entry name" value="Acylphosphatase"/>
    <property type="match status" value="1"/>
</dbReference>
<dbReference type="PRINTS" id="PR00112">
    <property type="entry name" value="ACYLPHPHTASE"/>
</dbReference>
<dbReference type="SUPFAM" id="SSF54975">
    <property type="entry name" value="Acylphosphatase/BLUF domain-like"/>
    <property type="match status" value="1"/>
</dbReference>
<dbReference type="PROSITE" id="PS00151">
    <property type="entry name" value="ACYLPHOSPHATASE_2"/>
    <property type="match status" value="1"/>
</dbReference>
<dbReference type="PROSITE" id="PS51160">
    <property type="entry name" value="ACYLPHOSPHATASE_3"/>
    <property type="match status" value="1"/>
</dbReference>
<accession>Q3IPI5</accession>
<gene>
    <name type="primary">acyP</name>
    <name type="ordered locus">NP_3750A</name>
</gene>